<protein>
    <recommendedName>
        <fullName>Membrane-bound transcription factor site-2 protease</fullName>
        <ecNumber evidence="1">3.4.24.85</ecNumber>
    </recommendedName>
    <alternativeName>
        <fullName>Endopeptidase S2P</fullName>
    </alternativeName>
</protein>
<sequence length="521" mass="57561">MIPVSLVVVVVGGWTVVYLTDLVLKSSVYFKHSYEDWLESNGLSISPFHIRWQTAVFNRAFYSWGRRKARMLYQWFNFGMVFGVIAMFSSFFLLGKTLMQTLAQMMADSPSSYSSSSSSSSSSSSSSSSSSSSSSSSSLHNEQVLQVVVPGINLPVNQLTYFFAAVLISGVVHEIGHGIAAIREQVRFNGFGIFLFIIYPGAFVDLFTTHLQLISPVQQLRIFCAGIWHNFVLALLGILALVLLPVILLPFYYTGVGVLITEVAEDSPAIGPRGLFVGDLVTHLQDCPVTNVQDWNECLDTIAYEPQIGYCISASTLQQLSFPVRAYKRLDGSTECCNNHSLTDVCFSYRNNFNKRLHTCLPARKAVEATQVCRTNKDCKKSSSSSFCIIPSLETHTRLIKVKHPPQIDMLYVGHPLHLHYTVSITSFIPRFNFLSIDLPVVVETFVKYLISLSGALAIVNAVPCFALDGQWILNSFLDATLTSVIGDNDVKDLIGFFILLGGSVLLAANVTLGLWMVTAR</sequence>
<reference key="1">
    <citation type="submission" date="2004-11" db="EMBL/GenBank/DDBJ databases">
        <authorList>
            <consortium name="The German cDNA consortium"/>
        </authorList>
    </citation>
    <scope>NUCLEOTIDE SEQUENCE [LARGE SCALE MRNA]</scope>
    <source>
        <tissue>Brain cortex</tissue>
    </source>
</reference>
<organism>
    <name type="scientific">Pongo abelii</name>
    <name type="common">Sumatran orangutan</name>
    <name type="synonym">Pongo pygmaeus abelii</name>
    <dbReference type="NCBI Taxonomy" id="9601"/>
    <lineage>
        <taxon>Eukaryota</taxon>
        <taxon>Metazoa</taxon>
        <taxon>Chordata</taxon>
        <taxon>Craniata</taxon>
        <taxon>Vertebrata</taxon>
        <taxon>Euteleostomi</taxon>
        <taxon>Mammalia</taxon>
        <taxon>Eutheria</taxon>
        <taxon>Euarchontoglires</taxon>
        <taxon>Primates</taxon>
        <taxon>Haplorrhini</taxon>
        <taxon>Catarrhini</taxon>
        <taxon>Hominidae</taxon>
        <taxon>Pongo</taxon>
    </lineage>
</organism>
<comment type="function">
    <text evidence="1">Zinc metalloprotease that mediates intramembrane proteolysis of proteins such as ATF6, ATF6B, SREBF1/SREBP1 and SREBF2/SREBP2. Catalyzes the second step in the proteolytic activation of the sterol regulatory element-binding proteins (SREBPs) SREBF1/SREBP1 and SREBF2/SREBP2: cleaves SREBPs within the first transmembrane segment, thereby releasing the N-terminal segment with a portion of the transmembrane segment attached. Mature N-terminal SREBP fragments shuttle to the nucleus and activate gene transcription. Also mediates the second step in the proteolytic activation of the cyclic AMP-dependent transcription factor ATF-6 (ATF6 and ATF6B). Involved in intramembrane proteolysis during bone formation. In astrocytes and osteoblasts, upon DNA damage and ER stress, mediates the second step of the regulated intramembrane proteolytic activation of the transcription factor CREB3L1, leading to the inhibition of cell-cycle progression.</text>
</comment>
<comment type="catalytic activity">
    <reaction evidence="1">
        <text>Cleaves several transcription factors that are type-2 transmembrane proteins within membrane-spanning domains. Known substrates include sterol regulatory element-binding protein (SREBP) -1, SREBP-2 and forms of the transcriptional activator ATF6. SREBP-2 is cleaved at the site 477-DRSRILL-|-CVLTFLCLSFNPLTSLLQWGGA-505. The residues Asn-Pro, 11 residues distal to the site of cleavage in the membrane-spanning domain, are important for cleavage by S2P endopeptidase. Replacement of either of these residues does not prevent cleavage, but there is no cleavage if both of these residues are replaced.</text>
        <dbReference type="EC" id="3.4.24.85"/>
    </reaction>
</comment>
<comment type="cofactor">
    <cofactor evidence="1">
        <name>Zn(2+)</name>
        <dbReference type="ChEBI" id="CHEBI:29105"/>
    </cofactor>
    <text evidence="1">Binds 1 zinc ion per subunit.</text>
</comment>
<comment type="subcellular location">
    <subcellularLocation>
        <location evidence="1">Membrane</location>
        <topology evidence="2">Multi-pass membrane protein</topology>
    </subcellularLocation>
    <subcellularLocation>
        <location evidence="1">Cytoplasm</location>
    </subcellularLocation>
    <subcellularLocation>
        <location evidence="1">Golgi apparatus membrane</location>
        <topology evidence="2">Multi-pass membrane protein</topology>
    </subcellularLocation>
</comment>
<comment type="similarity">
    <text evidence="5">Belongs to the peptidase M50A family.</text>
</comment>
<dbReference type="EC" id="3.4.24.85" evidence="1"/>
<dbReference type="EMBL" id="CR859090">
    <property type="protein sequence ID" value="CAH91282.1"/>
    <property type="molecule type" value="mRNA"/>
</dbReference>
<dbReference type="FunCoup" id="Q5RAC8">
    <property type="interactions" value="2384"/>
</dbReference>
<dbReference type="STRING" id="9601.ENSPPYP00000022583"/>
<dbReference type="MEROPS" id="M50.001"/>
<dbReference type="GlyCosmos" id="Q5RAC8">
    <property type="glycosylation" value="1 site, No reported glycans"/>
</dbReference>
<dbReference type="eggNOG" id="KOG2921">
    <property type="taxonomic scope" value="Eukaryota"/>
</dbReference>
<dbReference type="InParanoid" id="Q5RAC8"/>
<dbReference type="Proteomes" id="UP000001595">
    <property type="component" value="Unplaced"/>
</dbReference>
<dbReference type="GO" id="GO:0005737">
    <property type="term" value="C:cytoplasm"/>
    <property type="evidence" value="ECO:0000250"/>
    <property type="project" value="UniProtKB"/>
</dbReference>
<dbReference type="GO" id="GO:0000139">
    <property type="term" value="C:Golgi membrane"/>
    <property type="evidence" value="ECO:0007669"/>
    <property type="project" value="UniProtKB-SubCell"/>
</dbReference>
<dbReference type="GO" id="GO:0046872">
    <property type="term" value="F:metal ion binding"/>
    <property type="evidence" value="ECO:0007669"/>
    <property type="project" value="UniProtKB-KW"/>
</dbReference>
<dbReference type="GO" id="GO:0004222">
    <property type="term" value="F:metalloendopeptidase activity"/>
    <property type="evidence" value="ECO:0007669"/>
    <property type="project" value="InterPro"/>
</dbReference>
<dbReference type="GO" id="GO:0070977">
    <property type="term" value="P:bone maturation"/>
    <property type="evidence" value="ECO:0000250"/>
    <property type="project" value="UniProtKB"/>
</dbReference>
<dbReference type="GO" id="GO:0008203">
    <property type="term" value="P:cholesterol metabolic process"/>
    <property type="evidence" value="ECO:0007669"/>
    <property type="project" value="UniProtKB-KW"/>
</dbReference>
<dbReference type="GO" id="GO:0031293">
    <property type="term" value="P:membrane protein intracellular domain proteolysis"/>
    <property type="evidence" value="ECO:0007669"/>
    <property type="project" value="TreeGrafter"/>
</dbReference>
<dbReference type="GO" id="GO:1905897">
    <property type="term" value="P:regulation of response to endoplasmic reticulum stress"/>
    <property type="evidence" value="ECO:0007669"/>
    <property type="project" value="TreeGrafter"/>
</dbReference>
<dbReference type="CDD" id="cd06775">
    <property type="entry name" value="cpPDZ_MBTPS2-like"/>
    <property type="match status" value="1"/>
</dbReference>
<dbReference type="CDD" id="cd06162">
    <property type="entry name" value="S2P-M50_PDZ_SREBP"/>
    <property type="match status" value="1"/>
</dbReference>
<dbReference type="Gene3D" id="2.30.42.10">
    <property type="match status" value="1"/>
</dbReference>
<dbReference type="InterPro" id="IPR001193">
    <property type="entry name" value="MBTPS2"/>
</dbReference>
<dbReference type="InterPro" id="IPR036034">
    <property type="entry name" value="PDZ_sf"/>
</dbReference>
<dbReference type="InterPro" id="IPR008915">
    <property type="entry name" value="Peptidase_M50"/>
</dbReference>
<dbReference type="PANTHER" id="PTHR13325:SF3">
    <property type="entry name" value="MEMBRANE-BOUND TRANSCRIPTION FACTOR SITE-2 PROTEASE"/>
    <property type="match status" value="1"/>
</dbReference>
<dbReference type="PANTHER" id="PTHR13325">
    <property type="entry name" value="PROTEASE M50 MEMBRANE-BOUND TRANSCRIPTION FACTOR SITE 2 PROTEASE"/>
    <property type="match status" value="1"/>
</dbReference>
<dbReference type="Pfam" id="PF02163">
    <property type="entry name" value="Peptidase_M50"/>
    <property type="match status" value="1"/>
</dbReference>
<dbReference type="PRINTS" id="PR01000">
    <property type="entry name" value="SREBPS2PTASE"/>
</dbReference>
<dbReference type="SUPFAM" id="SSF50156">
    <property type="entry name" value="PDZ domain-like"/>
    <property type="match status" value="1"/>
</dbReference>
<dbReference type="PROSITE" id="PS00142">
    <property type="entry name" value="ZINC_PROTEASE"/>
    <property type="match status" value="1"/>
</dbReference>
<gene>
    <name type="primary">MBTPS2</name>
</gene>
<name>MBTP2_PONAB</name>
<evidence type="ECO:0000250" key="1">
    <source>
        <dbReference type="UniProtKB" id="O43462"/>
    </source>
</evidence>
<evidence type="ECO:0000255" key="2"/>
<evidence type="ECO:0000255" key="3">
    <source>
        <dbReference type="PROSITE-ProRule" id="PRU10095"/>
    </source>
</evidence>
<evidence type="ECO:0000256" key="4">
    <source>
        <dbReference type="SAM" id="MobiDB-lite"/>
    </source>
</evidence>
<evidence type="ECO:0000305" key="5"/>
<feature type="chain" id="PRO_0000261593" description="Membrane-bound transcription factor site-2 protease">
    <location>
        <begin position="1"/>
        <end position="521"/>
    </location>
</feature>
<feature type="topological domain" description="Cytoplasmic" evidence="1">
    <location>
        <begin position="1"/>
        <end position="3"/>
    </location>
</feature>
<feature type="transmembrane region" description="Helical" evidence="2">
    <location>
        <begin position="4"/>
        <end position="24"/>
    </location>
</feature>
<feature type="topological domain" description="Lumenal" evidence="1">
    <location>
        <begin position="25"/>
        <end position="74"/>
    </location>
</feature>
<feature type="transmembrane region" description="Helical" evidence="2">
    <location>
        <begin position="75"/>
        <end position="95"/>
    </location>
</feature>
<feature type="transmembrane region" description="Helical" evidence="2">
    <location>
        <begin position="96"/>
        <end position="107"/>
    </location>
</feature>
<feature type="topological domain" description="Lumenal" evidence="1">
    <location>
        <begin position="108"/>
        <end position="146"/>
    </location>
</feature>
<feature type="transmembrane region" description="Helical" evidence="2">
    <location>
        <begin position="147"/>
        <end position="171"/>
    </location>
</feature>
<feature type="transmembrane region" description="Helical" evidence="2">
    <location>
        <begin position="176"/>
        <end position="188"/>
    </location>
</feature>
<feature type="transmembrane region" description="Helical" evidence="2">
    <location>
        <begin position="189"/>
        <end position="211"/>
    </location>
</feature>
<feature type="transmembrane region" description="Helical" evidence="2">
    <location>
        <begin position="231"/>
        <end position="253"/>
    </location>
</feature>
<feature type="topological domain" description="Lumenal" evidence="1">
    <location>
        <begin position="254"/>
        <end position="448"/>
    </location>
</feature>
<feature type="transmembrane region" description="Helical" evidence="2">
    <location>
        <begin position="449"/>
        <end position="466"/>
    </location>
</feature>
<feature type="transmembrane region" description="Helical" evidence="2">
    <location>
        <begin position="467"/>
        <end position="478"/>
    </location>
</feature>
<feature type="topological domain" description="Lumenal" evidence="2">
    <location>
        <begin position="479"/>
        <end position="494"/>
    </location>
</feature>
<feature type="transmembrane region" description="Helical" evidence="2">
    <location>
        <begin position="495"/>
        <end position="515"/>
    </location>
</feature>
<feature type="topological domain" description="Cytoplasmic" evidence="2">
    <location>
        <begin position="516"/>
        <end position="521"/>
    </location>
</feature>
<feature type="region of interest" description="Disordered" evidence="4">
    <location>
        <begin position="113"/>
        <end position="137"/>
    </location>
</feature>
<feature type="active site" evidence="3">
    <location>
        <position position="174"/>
    </location>
</feature>
<feature type="binding site" evidence="3">
    <location>
        <position position="173"/>
    </location>
    <ligand>
        <name>Zn(2+)</name>
        <dbReference type="ChEBI" id="CHEBI:29105"/>
        <note>catalytic</note>
    </ligand>
</feature>
<feature type="binding site" evidence="3">
    <location>
        <position position="177"/>
    </location>
    <ligand>
        <name>Zn(2+)</name>
        <dbReference type="ChEBI" id="CHEBI:29105"/>
        <note>catalytic</note>
    </ligand>
</feature>
<feature type="glycosylation site" description="N-linked (GlcNAc...) asparagine" evidence="2">
    <location>
        <position position="339"/>
    </location>
</feature>
<keyword id="KW-0153">Cholesterol metabolism</keyword>
<keyword id="KW-0963">Cytoplasm</keyword>
<keyword id="KW-0325">Glycoprotein</keyword>
<keyword id="KW-0333">Golgi apparatus</keyword>
<keyword id="KW-0378">Hydrolase</keyword>
<keyword id="KW-0443">Lipid metabolism</keyword>
<keyword id="KW-0472">Membrane</keyword>
<keyword id="KW-0479">Metal-binding</keyword>
<keyword id="KW-0482">Metalloprotease</keyword>
<keyword id="KW-0645">Protease</keyword>
<keyword id="KW-1185">Reference proteome</keyword>
<keyword id="KW-0753">Steroid metabolism</keyword>
<keyword id="KW-1207">Sterol metabolism</keyword>
<keyword id="KW-0812">Transmembrane</keyword>
<keyword id="KW-1133">Transmembrane helix</keyword>
<keyword id="KW-0862">Zinc</keyword>
<accession>Q5RAC8</accession>
<proteinExistence type="evidence at transcript level"/>